<accession>A0M0C9</accession>
<dbReference type="EC" id="3.6.1.66" evidence="1"/>
<dbReference type="EMBL" id="CU207366">
    <property type="protein sequence ID" value="CAL66074.1"/>
    <property type="molecule type" value="Genomic_DNA"/>
</dbReference>
<dbReference type="RefSeq" id="WP_011708993.1">
    <property type="nucleotide sequence ID" value="NC_008571.1"/>
</dbReference>
<dbReference type="SMR" id="A0M0C9"/>
<dbReference type="STRING" id="411154.GFO_1100"/>
<dbReference type="KEGG" id="gfo:GFO_1100"/>
<dbReference type="eggNOG" id="COG0127">
    <property type="taxonomic scope" value="Bacteria"/>
</dbReference>
<dbReference type="HOGENOM" id="CLU_082080_0_2_10"/>
<dbReference type="OrthoDB" id="9807456at2"/>
<dbReference type="Proteomes" id="UP000000755">
    <property type="component" value="Chromosome"/>
</dbReference>
<dbReference type="GO" id="GO:0005829">
    <property type="term" value="C:cytosol"/>
    <property type="evidence" value="ECO:0007669"/>
    <property type="project" value="TreeGrafter"/>
</dbReference>
<dbReference type="GO" id="GO:0035870">
    <property type="term" value="F:dITP diphosphatase activity"/>
    <property type="evidence" value="ECO:0007669"/>
    <property type="project" value="RHEA"/>
</dbReference>
<dbReference type="GO" id="GO:0036220">
    <property type="term" value="F:ITP diphosphatase activity"/>
    <property type="evidence" value="ECO:0007669"/>
    <property type="project" value="UniProtKB-EC"/>
</dbReference>
<dbReference type="GO" id="GO:0046872">
    <property type="term" value="F:metal ion binding"/>
    <property type="evidence" value="ECO:0007669"/>
    <property type="project" value="UniProtKB-KW"/>
</dbReference>
<dbReference type="GO" id="GO:0000166">
    <property type="term" value="F:nucleotide binding"/>
    <property type="evidence" value="ECO:0007669"/>
    <property type="project" value="UniProtKB-KW"/>
</dbReference>
<dbReference type="GO" id="GO:0017111">
    <property type="term" value="F:ribonucleoside triphosphate phosphatase activity"/>
    <property type="evidence" value="ECO:0007669"/>
    <property type="project" value="InterPro"/>
</dbReference>
<dbReference type="GO" id="GO:0036222">
    <property type="term" value="F:XTP diphosphatase activity"/>
    <property type="evidence" value="ECO:0007669"/>
    <property type="project" value="RHEA"/>
</dbReference>
<dbReference type="GO" id="GO:0009117">
    <property type="term" value="P:nucleotide metabolic process"/>
    <property type="evidence" value="ECO:0007669"/>
    <property type="project" value="UniProtKB-KW"/>
</dbReference>
<dbReference type="GO" id="GO:0009146">
    <property type="term" value="P:purine nucleoside triphosphate catabolic process"/>
    <property type="evidence" value="ECO:0007669"/>
    <property type="project" value="UniProtKB-UniRule"/>
</dbReference>
<dbReference type="CDD" id="cd00515">
    <property type="entry name" value="HAM1"/>
    <property type="match status" value="1"/>
</dbReference>
<dbReference type="FunFam" id="3.90.950.10:FF:000001">
    <property type="entry name" value="dITP/XTP pyrophosphatase"/>
    <property type="match status" value="1"/>
</dbReference>
<dbReference type="Gene3D" id="3.90.950.10">
    <property type="match status" value="1"/>
</dbReference>
<dbReference type="HAMAP" id="MF_01405">
    <property type="entry name" value="Non_canon_purine_NTPase"/>
    <property type="match status" value="1"/>
</dbReference>
<dbReference type="InterPro" id="IPR020922">
    <property type="entry name" value="dITP/XTP_pyrophosphatase"/>
</dbReference>
<dbReference type="InterPro" id="IPR029001">
    <property type="entry name" value="ITPase-like_fam"/>
</dbReference>
<dbReference type="InterPro" id="IPR002637">
    <property type="entry name" value="RdgB/HAM1"/>
</dbReference>
<dbReference type="NCBIfam" id="NF011398">
    <property type="entry name" value="PRK14823.1"/>
    <property type="match status" value="1"/>
</dbReference>
<dbReference type="NCBIfam" id="TIGR00042">
    <property type="entry name" value="RdgB/HAM1 family non-canonical purine NTP pyrophosphatase"/>
    <property type="match status" value="1"/>
</dbReference>
<dbReference type="PANTHER" id="PTHR11067:SF9">
    <property type="entry name" value="INOSINE TRIPHOSPHATE PYROPHOSPHATASE"/>
    <property type="match status" value="1"/>
</dbReference>
<dbReference type="PANTHER" id="PTHR11067">
    <property type="entry name" value="INOSINE TRIPHOSPHATE PYROPHOSPHATASE/HAM1 PROTEIN"/>
    <property type="match status" value="1"/>
</dbReference>
<dbReference type="Pfam" id="PF01725">
    <property type="entry name" value="Ham1p_like"/>
    <property type="match status" value="1"/>
</dbReference>
<dbReference type="SUPFAM" id="SSF52972">
    <property type="entry name" value="ITPase-like"/>
    <property type="match status" value="1"/>
</dbReference>
<sequence>MKLVFATHNPNKFREIKSLVPKHIELLSLSDINCNEDIEETGDTIDENAMIKADYVRNHYGYDCFADDTGLEVHSLAGAPGVYSARYAGDEKNDEANIEKLLEQLKKRDDRTARFKTVIALNLKGNQNLFTGICEGEILEEKTGTKGFGYDPIFLPNGFESSFAEMELTEKSKISHRGIAFRELMEYLSK</sequence>
<proteinExistence type="inferred from homology"/>
<comment type="function">
    <text evidence="1">Pyrophosphatase that catalyzes the hydrolysis of nucleoside triphosphates to their monophosphate derivatives, with a high preference for the non-canonical purine nucleotides XTP (xanthosine triphosphate), dITP (deoxyinosine triphosphate) and ITP. Seems to function as a house-cleaning enzyme that removes non-canonical purine nucleotides from the nucleotide pool, thus preventing their incorporation into DNA/RNA and avoiding chromosomal lesions.</text>
</comment>
<comment type="catalytic activity">
    <reaction evidence="1">
        <text>XTP + H2O = XMP + diphosphate + H(+)</text>
        <dbReference type="Rhea" id="RHEA:28610"/>
        <dbReference type="ChEBI" id="CHEBI:15377"/>
        <dbReference type="ChEBI" id="CHEBI:15378"/>
        <dbReference type="ChEBI" id="CHEBI:33019"/>
        <dbReference type="ChEBI" id="CHEBI:57464"/>
        <dbReference type="ChEBI" id="CHEBI:61314"/>
        <dbReference type="EC" id="3.6.1.66"/>
    </reaction>
</comment>
<comment type="catalytic activity">
    <reaction evidence="1">
        <text>dITP + H2O = dIMP + diphosphate + H(+)</text>
        <dbReference type="Rhea" id="RHEA:28342"/>
        <dbReference type="ChEBI" id="CHEBI:15377"/>
        <dbReference type="ChEBI" id="CHEBI:15378"/>
        <dbReference type="ChEBI" id="CHEBI:33019"/>
        <dbReference type="ChEBI" id="CHEBI:61194"/>
        <dbReference type="ChEBI" id="CHEBI:61382"/>
        <dbReference type="EC" id="3.6.1.66"/>
    </reaction>
</comment>
<comment type="catalytic activity">
    <reaction evidence="1">
        <text>ITP + H2O = IMP + diphosphate + H(+)</text>
        <dbReference type="Rhea" id="RHEA:29399"/>
        <dbReference type="ChEBI" id="CHEBI:15377"/>
        <dbReference type="ChEBI" id="CHEBI:15378"/>
        <dbReference type="ChEBI" id="CHEBI:33019"/>
        <dbReference type="ChEBI" id="CHEBI:58053"/>
        <dbReference type="ChEBI" id="CHEBI:61402"/>
        <dbReference type="EC" id="3.6.1.66"/>
    </reaction>
</comment>
<comment type="cofactor">
    <cofactor evidence="1">
        <name>Mg(2+)</name>
        <dbReference type="ChEBI" id="CHEBI:18420"/>
    </cofactor>
    <text evidence="1">Binds 1 Mg(2+) ion per subunit.</text>
</comment>
<comment type="subunit">
    <text evidence="1">Homodimer.</text>
</comment>
<comment type="similarity">
    <text evidence="1">Belongs to the HAM1 NTPase family.</text>
</comment>
<keyword id="KW-0378">Hydrolase</keyword>
<keyword id="KW-0460">Magnesium</keyword>
<keyword id="KW-0479">Metal-binding</keyword>
<keyword id="KW-0546">Nucleotide metabolism</keyword>
<keyword id="KW-0547">Nucleotide-binding</keyword>
<gene>
    <name type="ordered locus">GFO_1100</name>
</gene>
<organism>
    <name type="scientific">Christiangramia forsetii (strain DSM 17595 / CGMCC 1.15422 / KT0803)</name>
    <name type="common">Gramella forsetii</name>
    <dbReference type="NCBI Taxonomy" id="411154"/>
    <lineage>
        <taxon>Bacteria</taxon>
        <taxon>Pseudomonadati</taxon>
        <taxon>Bacteroidota</taxon>
        <taxon>Flavobacteriia</taxon>
        <taxon>Flavobacteriales</taxon>
        <taxon>Flavobacteriaceae</taxon>
        <taxon>Christiangramia</taxon>
    </lineage>
</organism>
<feature type="chain" id="PRO_1000068423" description="dITP/XTP pyrophosphatase">
    <location>
        <begin position="1"/>
        <end position="190"/>
    </location>
</feature>
<feature type="active site" description="Proton acceptor" evidence="1">
    <location>
        <position position="68"/>
    </location>
</feature>
<feature type="binding site" evidence="1">
    <location>
        <begin position="7"/>
        <end position="12"/>
    </location>
    <ligand>
        <name>substrate</name>
    </ligand>
</feature>
<feature type="binding site" evidence="1">
    <location>
        <position position="39"/>
    </location>
    <ligand>
        <name>Mg(2+)</name>
        <dbReference type="ChEBI" id="CHEBI:18420"/>
    </ligand>
</feature>
<feature type="binding site" evidence="1">
    <location>
        <position position="68"/>
    </location>
    <ligand>
        <name>Mg(2+)</name>
        <dbReference type="ChEBI" id="CHEBI:18420"/>
    </ligand>
</feature>
<feature type="binding site" evidence="1">
    <location>
        <position position="69"/>
    </location>
    <ligand>
        <name>substrate</name>
    </ligand>
</feature>
<feature type="binding site" evidence="1">
    <location>
        <begin position="148"/>
        <end position="151"/>
    </location>
    <ligand>
        <name>substrate</name>
    </ligand>
</feature>
<feature type="binding site" evidence="1">
    <location>
        <position position="171"/>
    </location>
    <ligand>
        <name>substrate</name>
    </ligand>
</feature>
<feature type="binding site" evidence="1">
    <location>
        <begin position="176"/>
        <end position="177"/>
    </location>
    <ligand>
        <name>substrate</name>
    </ligand>
</feature>
<name>IXTPA_CHRFK</name>
<evidence type="ECO:0000255" key="1">
    <source>
        <dbReference type="HAMAP-Rule" id="MF_01405"/>
    </source>
</evidence>
<protein>
    <recommendedName>
        <fullName evidence="1">dITP/XTP pyrophosphatase</fullName>
        <ecNumber evidence="1">3.6.1.66</ecNumber>
    </recommendedName>
    <alternativeName>
        <fullName evidence="1">Non-canonical purine NTP pyrophosphatase</fullName>
    </alternativeName>
    <alternativeName>
        <fullName evidence="1">Non-standard purine NTP pyrophosphatase</fullName>
    </alternativeName>
    <alternativeName>
        <fullName evidence="1">Nucleoside-triphosphate diphosphatase</fullName>
    </alternativeName>
    <alternativeName>
        <fullName evidence="1">Nucleoside-triphosphate pyrophosphatase</fullName>
        <shortName evidence="1">NTPase</shortName>
    </alternativeName>
</protein>
<reference key="1">
    <citation type="journal article" date="2006" name="Environ. Microbiol.">
        <title>Whole genome analysis of the marine Bacteroidetes'Gramella forsetii' reveals adaptations to degradation of polymeric organic matter.</title>
        <authorList>
            <person name="Bauer M."/>
            <person name="Kube M."/>
            <person name="Teeling H."/>
            <person name="Richter M."/>
            <person name="Lombardot T."/>
            <person name="Allers E."/>
            <person name="Wuerdemann C.A."/>
            <person name="Quast C."/>
            <person name="Kuhl H."/>
            <person name="Knaust F."/>
            <person name="Woebken D."/>
            <person name="Bischof K."/>
            <person name="Mussmann M."/>
            <person name="Choudhuri J.V."/>
            <person name="Meyer F."/>
            <person name="Reinhardt R."/>
            <person name="Amann R.I."/>
            <person name="Gloeckner F.O."/>
        </authorList>
    </citation>
    <scope>NUCLEOTIDE SEQUENCE [LARGE SCALE GENOMIC DNA]</scope>
    <source>
        <strain>DSM 17595 / CGMCC 1.15422 / KT0803</strain>
    </source>
</reference>